<reference key="1">
    <citation type="journal article" date="1992" name="Eur. J. Biochem.">
        <title>Plant mitochondrial F0F1 ATP synthase. Identification of the individual subunits and properties of the purified spinach leaf mitochondrial ATP synthase.</title>
        <authorList>
            <person name="Hamasur B."/>
            <person name="Glaser E."/>
        </authorList>
    </citation>
    <scope>PROTEIN SEQUENCE</scope>
    <source>
        <strain>cv. Medania</strain>
        <tissue>Leaf mesophyll</tissue>
    </source>
</reference>
<dbReference type="PIR" id="S21243">
    <property type="entry name" value="S21243"/>
</dbReference>
<dbReference type="Proteomes" id="UP001155700">
    <property type="component" value="Unplaced"/>
</dbReference>
<dbReference type="GO" id="GO:0005743">
    <property type="term" value="C:mitochondrial inner membrane"/>
    <property type="evidence" value="ECO:0007669"/>
    <property type="project" value="UniProtKB-SubCell"/>
</dbReference>
<dbReference type="GO" id="GO:0045259">
    <property type="term" value="C:proton-transporting ATP synthase complex"/>
    <property type="evidence" value="ECO:0007669"/>
    <property type="project" value="UniProtKB-KW"/>
</dbReference>
<dbReference type="GO" id="GO:0046933">
    <property type="term" value="F:proton-transporting ATP synthase activity, rotational mechanism"/>
    <property type="evidence" value="ECO:0007669"/>
    <property type="project" value="InterPro"/>
</dbReference>
<dbReference type="Gene3D" id="1.10.287.80">
    <property type="entry name" value="ATP synthase, gamma subunit, helix hairpin domain"/>
    <property type="match status" value="1"/>
</dbReference>
<dbReference type="InterPro" id="IPR035968">
    <property type="entry name" value="ATP_synth_F1_ATPase_gsu"/>
</dbReference>
<dbReference type="SUPFAM" id="SSF52943">
    <property type="entry name" value="ATP synthase (F1-ATPase), gamma subunit"/>
    <property type="match status" value="1"/>
</dbReference>
<keyword id="KW-0066">ATP synthesis</keyword>
<keyword id="KW-0139">CF(1)</keyword>
<keyword id="KW-0903">Direct protein sequencing</keyword>
<keyword id="KW-0375">Hydrogen ion transport</keyword>
<keyword id="KW-0406">Ion transport</keyword>
<keyword id="KW-0472">Membrane</keyword>
<keyword id="KW-0496">Mitochondrion</keyword>
<keyword id="KW-0999">Mitochondrion inner membrane</keyword>
<keyword id="KW-1185">Reference proteome</keyword>
<keyword id="KW-0813">Transport</keyword>
<accession>P80084</accession>
<organism>
    <name type="scientific">Spinacia oleracea</name>
    <name type="common">Spinach</name>
    <dbReference type="NCBI Taxonomy" id="3562"/>
    <lineage>
        <taxon>Eukaryota</taxon>
        <taxon>Viridiplantae</taxon>
        <taxon>Streptophyta</taxon>
        <taxon>Embryophyta</taxon>
        <taxon>Tracheophyta</taxon>
        <taxon>Spermatophyta</taxon>
        <taxon>Magnoliopsida</taxon>
        <taxon>eudicotyledons</taxon>
        <taxon>Gunneridae</taxon>
        <taxon>Pentapetalae</taxon>
        <taxon>Caryophyllales</taxon>
        <taxon>Chenopodiaceae</taxon>
        <taxon>Chenopodioideae</taxon>
        <taxon>Anserineae</taxon>
        <taxon>Spinacia</taxon>
    </lineage>
</organism>
<sequence>IGTQIVXNXMKSIKNIQKITKAMKMV</sequence>
<comment type="function">
    <text>Mitochondrial membrane ATP synthase (F(1)F(0) ATP synthase or Complex V) produces ATP from ADP in the presence of a proton gradient across the membrane which is generated by electron transport complexes of the respiratory chain. F-type ATPases consist of two structural domains, F(1) - containing the extramembraneous catalytic core, and F(0) - containing the membrane proton channel, linked together by a central stalk and a peripheral stalk. During catalysis, ATP synthesis in the catalytic domain of F(1) is coupled via a rotary mechanism of the central stalk subunits to proton translocation. Part of the complex F(1) domain and the central stalk which is part of the complex rotary element. The gamma subunit protrudes into the catalytic domain formed of alpha(3)beta(3). Rotation of the central stalk against the surrounding alpha(3)beta(3) subunits leads to hydrolysis of ATP in three separate catalytic sites on the beta subunits.</text>
</comment>
<comment type="subunit">
    <text>F-type ATPases have 2 components, CF(1) - the catalytic core - and CF(0) - the membrane proton channel. CF(1) has five subunits: alpha(3), beta(3), gamma(1), delta(1), epsilon(1). CF(0) has three main subunits: a, b and c.</text>
</comment>
<comment type="subcellular location">
    <subcellularLocation>
        <location>Mitochondrion</location>
    </subcellularLocation>
    <subcellularLocation>
        <location>Mitochondrion inner membrane</location>
        <topology>Peripheral membrane protein</topology>
    </subcellularLocation>
</comment>
<comment type="similarity">
    <text evidence="1">Belongs to the ATPase gamma chain family.</text>
</comment>
<feature type="chain" id="PRO_0000073429" description="ATP synthase subunit gamma, mitochondrial">
    <location>
        <begin position="1"/>
        <end position="26" status="greater than"/>
    </location>
</feature>
<feature type="non-terminal residue">
    <location>
        <position position="26"/>
    </location>
</feature>
<protein>
    <recommendedName>
        <fullName>ATP synthase subunit gamma, mitochondrial</fullName>
    </recommendedName>
    <alternativeName>
        <fullName>F-ATPase gamma subunit</fullName>
    </alternativeName>
</protein>
<evidence type="ECO:0000305" key="1"/>
<gene>
    <name type="primary">ATPC</name>
</gene>
<proteinExistence type="evidence at protein level"/>
<name>ATPG3_SPIOL</name>